<gene>
    <name evidence="1" type="primary">gcvH1</name>
    <name type="ordered locus">Saci_1384</name>
</gene>
<accession>Q4J912</accession>
<proteinExistence type="inferred from homology"/>
<sequence length="138" mass="15507">MSVVIDGKYLILKDRHYTETDEWILINGNIATVGITDYAQKKLKDIVGIELPQVGREVTIGEQVAVVESVKAAADIFSPLSGSVLEVNKELQSSPETINKDPYGRGWIFKLKIKDEKEVSKLLNFEQYIISIKQREGI</sequence>
<feature type="chain" id="PRO_0000166279" description="Probable glycine cleavage system H protein 1">
    <location>
        <begin position="1"/>
        <end position="138"/>
    </location>
</feature>
<feature type="domain" description="Lipoyl-binding" evidence="2">
    <location>
        <begin position="30"/>
        <end position="112"/>
    </location>
</feature>
<feature type="modified residue" description="N6-lipoyllysine" evidence="1">
    <location>
        <position position="71"/>
    </location>
</feature>
<name>GCSH1_SULAC</name>
<protein>
    <recommendedName>
        <fullName evidence="1">Probable glycine cleavage system H protein 1</fullName>
    </recommendedName>
</protein>
<reference key="1">
    <citation type="journal article" date="2005" name="J. Bacteriol.">
        <title>The genome of Sulfolobus acidocaldarius, a model organism of the Crenarchaeota.</title>
        <authorList>
            <person name="Chen L."/>
            <person name="Bruegger K."/>
            <person name="Skovgaard M."/>
            <person name="Redder P."/>
            <person name="She Q."/>
            <person name="Torarinsson E."/>
            <person name="Greve B."/>
            <person name="Awayez M."/>
            <person name="Zibat A."/>
            <person name="Klenk H.-P."/>
            <person name="Garrett R.A."/>
        </authorList>
    </citation>
    <scope>NUCLEOTIDE SEQUENCE [LARGE SCALE GENOMIC DNA]</scope>
    <source>
        <strain>ATCC 33909 / DSM 639 / JCM 8929 / NBRC 15157 / NCIMB 11770</strain>
    </source>
</reference>
<keyword id="KW-0450">Lipoyl</keyword>
<keyword id="KW-1185">Reference proteome</keyword>
<comment type="function">
    <text evidence="1">The glycine cleavage system catalyzes the degradation of glycine. The H protein shuttles the methylamine group of glycine from the P protein to the T protein.</text>
</comment>
<comment type="cofactor">
    <cofactor evidence="1">
        <name>(R)-lipoate</name>
        <dbReference type="ChEBI" id="CHEBI:83088"/>
    </cofactor>
    <text evidence="1">Binds 1 lipoyl cofactor covalently.</text>
</comment>
<comment type="subunit">
    <text evidence="1">The glycine cleavage system is composed of four proteins: P, T, L and H.</text>
</comment>
<comment type="similarity">
    <text evidence="1">Belongs to the GcvH family.</text>
</comment>
<organism>
    <name type="scientific">Sulfolobus acidocaldarius (strain ATCC 33909 / DSM 639 / JCM 8929 / NBRC 15157 / NCIMB 11770)</name>
    <dbReference type="NCBI Taxonomy" id="330779"/>
    <lineage>
        <taxon>Archaea</taxon>
        <taxon>Thermoproteota</taxon>
        <taxon>Thermoprotei</taxon>
        <taxon>Sulfolobales</taxon>
        <taxon>Sulfolobaceae</taxon>
        <taxon>Sulfolobus</taxon>
    </lineage>
</organism>
<evidence type="ECO:0000255" key="1">
    <source>
        <dbReference type="HAMAP-Rule" id="MF_00272"/>
    </source>
</evidence>
<evidence type="ECO:0000255" key="2">
    <source>
        <dbReference type="PROSITE-ProRule" id="PRU01066"/>
    </source>
</evidence>
<dbReference type="EMBL" id="CP000077">
    <property type="protein sequence ID" value="AAY80717.1"/>
    <property type="molecule type" value="Genomic_DNA"/>
</dbReference>
<dbReference type="RefSeq" id="WP_011278219.1">
    <property type="nucleotide sequence ID" value="NC_007181.1"/>
</dbReference>
<dbReference type="SMR" id="Q4J912"/>
<dbReference type="STRING" id="330779.Saci_1384"/>
<dbReference type="GeneID" id="14551885"/>
<dbReference type="KEGG" id="sai:Saci_1384"/>
<dbReference type="PATRIC" id="fig|330779.12.peg.1336"/>
<dbReference type="eggNOG" id="arCOG01303">
    <property type="taxonomic scope" value="Archaea"/>
</dbReference>
<dbReference type="HOGENOM" id="CLU_097408_2_2_2"/>
<dbReference type="Proteomes" id="UP000001018">
    <property type="component" value="Chromosome"/>
</dbReference>
<dbReference type="GO" id="GO:0005737">
    <property type="term" value="C:cytoplasm"/>
    <property type="evidence" value="ECO:0007669"/>
    <property type="project" value="TreeGrafter"/>
</dbReference>
<dbReference type="GO" id="GO:0005960">
    <property type="term" value="C:glycine cleavage complex"/>
    <property type="evidence" value="ECO:0007669"/>
    <property type="project" value="InterPro"/>
</dbReference>
<dbReference type="GO" id="GO:0019464">
    <property type="term" value="P:glycine decarboxylation via glycine cleavage system"/>
    <property type="evidence" value="ECO:0007669"/>
    <property type="project" value="UniProtKB-UniRule"/>
</dbReference>
<dbReference type="CDD" id="cd06848">
    <property type="entry name" value="GCS_H"/>
    <property type="match status" value="1"/>
</dbReference>
<dbReference type="Gene3D" id="2.40.50.100">
    <property type="match status" value="1"/>
</dbReference>
<dbReference type="HAMAP" id="MF_00272">
    <property type="entry name" value="GcvH"/>
    <property type="match status" value="1"/>
</dbReference>
<dbReference type="InterPro" id="IPR003016">
    <property type="entry name" value="2-oxoA_DH_lipoyl-BS"/>
</dbReference>
<dbReference type="InterPro" id="IPR000089">
    <property type="entry name" value="Biotin_lipoyl"/>
</dbReference>
<dbReference type="InterPro" id="IPR002930">
    <property type="entry name" value="GCV_H"/>
</dbReference>
<dbReference type="InterPro" id="IPR033753">
    <property type="entry name" value="GCV_H/Fam206"/>
</dbReference>
<dbReference type="InterPro" id="IPR017453">
    <property type="entry name" value="GCV_H_sub"/>
</dbReference>
<dbReference type="InterPro" id="IPR011053">
    <property type="entry name" value="Single_hybrid_motif"/>
</dbReference>
<dbReference type="NCBIfam" id="TIGR00527">
    <property type="entry name" value="gcvH"/>
    <property type="match status" value="1"/>
</dbReference>
<dbReference type="NCBIfam" id="NF002270">
    <property type="entry name" value="PRK01202.1"/>
    <property type="match status" value="1"/>
</dbReference>
<dbReference type="PANTHER" id="PTHR11715">
    <property type="entry name" value="GLYCINE CLEAVAGE SYSTEM H PROTEIN"/>
    <property type="match status" value="1"/>
</dbReference>
<dbReference type="PANTHER" id="PTHR11715:SF3">
    <property type="entry name" value="GLYCINE CLEAVAGE SYSTEM H PROTEIN-RELATED"/>
    <property type="match status" value="1"/>
</dbReference>
<dbReference type="Pfam" id="PF01597">
    <property type="entry name" value="GCV_H"/>
    <property type="match status" value="1"/>
</dbReference>
<dbReference type="SUPFAM" id="SSF51230">
    <property type="entry name" value="Single hybrid motif"/>
    <property type="match status" value="1"/>
</dbReference>
<dbReference type="PROSITE" id="PS50968">
    <property type="entry name" value="BIOTINYL_LIPOYL"/>
    <property type="match status" value="1"/>
</dbReference>
<dbReference type="PROSITE" id="PS00189">
    <property type="entry name" value="LIPOYL"/>
    <property type="match status" value="1"/>
</dbReference>